<reference key="1">
    <citation type="journal article" date="2005" name="Nature">
        <title>The genome of the social amoeba Dictyostelium discoideum.</title>
        <authorList>
            <person name="Eichinger L."/>
            <person name="Pachebat J.A."/>
            <person name="Gloeckner G."/>
            <person name="Rajandream M.A."/>
            <person name="Sucgang R."/>
            <person name="Berriman M."/>
            <person name="Song J."/>
            <person name="Olsen R."/>
            <person name="Szafranski K."/>
            <person name="Xu Q."/>
            <person name="Tunggal B."/>
            <person name="Kummerfeld S."/>
            <person name="Madera M."/>
            <person name="Konfortov B.A."/>
            <person name="Rivero F."/>
            <person name="Bankier A.T."/>
            <person name="Lehmann R."/>
            <person name="Hamlin N."/>
            <person name="Davies R."/>
            <person name="Gaudet P."/>
            <person name="Fey P."/>
            <person name="Pilcher K."/>
            <person name="Chen G."/>
            <person name="Saunders D."/>
            <person name="Sodergren E.J."/>
            <person name="Davis P."/>
            <person name="Kerhornou A."/>
            <person name="Nie X."/>
            <person name="Hall N."/>
            <person name="Anjard C."/>
            <person name="Hemphill L."/>
            <person name="Bason N."/>
            <person name="Farbrother P."/>
            <person name="Desany B."/>
            <person name="Just E."/>
            <person name="Morio T."/>
            <person name="Rost R."/>
            <person name="Churcher C.M."/>
            <person name="Cooper J."/>
            <person name="Haydock S."/>
            <person name="van Driessche N."/>
            <person name="Cronin A."/>
            <person name="Goodhead I."/>
            <person name="Muzny D.M."/>
            <person name="Mourier T."/>
            <person name="Pain A."/>
            <person name="Lu M."/>
            <person name="Harper D."/>
            <person name="Lindsay R."/>
            <person name="Hauser H."/>
            <person name="James K.D."/>
            <person name="Quiles M."/>
            <person name="Madan Babu M."/>
            <person name="Saito T."/>
            <person name="Buchrieser C."/>
            <person name="Wardroper A."/>
            <person name="Felder M."/>
            <person name="Thangavelu M."/>
            <person name="Johnson D."/>
            <person name="Knights A."/>
            <person name="Loulseged H."/>
            <person name="Mungall K.L."/>
            <person name="Oliver K."/>
            <person name="Price C."/>
            <person name="Quail M.A."/>
            <person name="Urushihara H."/>
            <person name="Hernandez J."/>
            <person name="Rabbinowitsch E."/>
            <person name="Steffen D."/>
            <person name="Sanders M."/>
            <person name="Ma J."/>
            <person name="Kohara Y."/>
            <person name="Sharp S."/>
            <person name="Simmonds M.N."/>
            <person name="Spiegler S."/>
            <person name="Tivey A."/>
            <person name="Sugano S."/>
            <person name="White B."/>
            <person name="Walker D."/>
            <person name="Woodward J.R."/>
            <person name="Winckler T."/>
            <person name="Tanaka Y."/>
            <person name="Shaulsky G."/>
            <person name="Schleicher M."/>
            <person name="Weinstock G.M."/>
            <person name="Rosenthal A."/>
            <person name="Cox E.C."/>
            <person name="Chisholm R.L."/>
            <person name="Gibbs R.A."/>
            <person name="Loomis W.F."/>
            <person name="Platzer M."/>
            <person name="Kay R.R."/>
            <person name="Williams J.G."/>
            <person name="Dear P.H."/>
            <person name="Noegel A.A."/>
            <person name="Barrell B.G."/>
            <person name="Kuspa A."/>
        </authorList>
    </citation>
    <scope>NUCLEOTIDE SEQUENCE [LARGE SCALE GENOMIC DNA]</scope>
    <source>
        <strain>AX4</strain>
    </source>
</reference>
<feature type="chain" id="PRO_0000351220" description="Developmentally-regulated GTP-binding protein 1 homolog">
    <location>
        <begin position="1"/>
        <end position="370"/>
    </location>
</feature>
<feature type="domain" description="OBG-type G" evidence="1">
    <location>
        <begin position="65"/>
        <end position="292"/>
    </location>
</feature>
<feature type="domain" description="TGS" evidence="2">
    <location>
        <begin position="292"/>
        <end position="369"/>
    </location>
</feature>
<feature type="binding site" evidence="1">
    <location>
        <begin position="71"/>
        <end position="78"/>
    </location>
    <ligand>
        <name>GTP</name>
        <dbReference type="ChEBI" id="CHEBI:37565"/>
    </ligand>
</feature>
<feature type="binding site" evidence="1">
    <location>
        <begin position="117"/>
        <end position="121"/>
    </location>
    <ligand>
        <name>GTP</name>
        <dbReference type="ChEBI" id="CHEBI:37565"/>
    </ligand>
</feature>
<feature type="binding site" evidence="1">
    <location>
        <begin position="250"/>
        <end position="253"/>
    </location>
    <ligand>
        <name>GTP</name>
        <dbReference type="ChEBI" id="CHEBI:37565"/>
    </ligand>
</feature>
<name>DRG1_DICDI</name>
<sequence>MSLVQKIKEVEDEMARTQKNKATSFHLGVLKAKLAKYKRELLLGPSKGAAAGAGEGFDVSKAGDARVGLIGFPSVGKSTLLTKLTGTSSEVASYEFTTLTCIPGVINYKGAKIQLLDLPGIIEGAKDGKGRGRQVIAVGRTCNLILIVLDAMKPLVHKKIIERELDGFGIRLNKQPPPITFKKKEKGGINFSHTPNVNPTQLDSETVKAICAEYKIHNADVILRGNCTVDEFIDVIEGNRIYVPCIYVLNKIDAISIEELDLLDKIPHYVPISSHLEWNLDALLDKIWEYLKLIRVYTKPKGLIPDYNEPVVIRGGEEASIETFCNHIHNSIIRQFRYALVWGSSAKHNPQRCGKDHVLADEDIVQIVKK</sequence>
<comment type="similarity">
    <text evidence="1">Belongs to the TRAFAC class OBG-HflX-like GTPase superfamily. OBG GTPase family.</text>
</comment>
<proteinExistence type="inferred from homology"/>
<organism>
    <name type="scientific">Dictyostelium discoideum</name>
    <name type="common">Social amoeba</name>
    <dbReference type="NCBI Taxonomy" id="44689"/>
    <lineage>
        <taxon>Eukaryota</taxon>
        <taxon>Amoebozoa</taxon>
        <taxon>Evosea</taxon>
        <taxon>Eumycetozoa</taxon>
        <taxon>Dictyostelia</taxon>
        <taxon>Dictyosteliales</taxon>
        <taxon>Dictyosteliaceae</taxon>
        <taxon>Dictyostelium</taxon>
    </lineage>
</organism>
<keyword id="KW-0342">GTP-binding</keyword>
<keyword id="KW-0547">Nucleotide-binding</keyword>
<keyword id="KW-1185">Reference proteome</keyword>
<evidence type="ECO:0000255" key="1">
    <source>
        <dbReference type="PROSITE-ProRule" id="PRU01047"/>
    </source>
</evidence>
<evidence type="ECO:0000255" key="2">
    <source>
        <dbReference type="PROSITE-ProRule" id="PRU01228"/>
    </source>
</evidence>
<gene>
    <name type="primary">drg1</name>
    <name type="ORF">DDB_G0289317</name>
</gene>
<accession>Q54HP3</accession>
<protein>
    <recommendedName>
        <fullName>Developmentally-regulated GTP-binding protein 1 homolog</fullName>
        <shortName>DRG-1</shortName>
    </recommendedName>
</protein>
<dbReference type="EMBL" id="AAFI02000138">
    <property type="protein sequence ID" value="EAL62781.1"/>
    <property type="molecule type" value="Genomic_DNA"/>
</dbReference>
<dbReference type="RefSeq" id="XP_636294.1">
    <property type="nucleotide sequence ID" value="XM_631202.1"/>
</dbReference>
<dbReference type="SMR" id="Q54HP3"/>
<dbReference type="FunCoup" id="Q54HP3">
    <property type="interactions" value="1280"/>
</dbReference>
<dbReference type="STRING" id="44689.Q54HP3"/>
<dbReference type="PaxDb" id="44689-DDB0188361"/>
<dbReference type="EnsemblProtists" id="EAL62781">
    <property type="protein sequence ID" value="EAL62781"/>
    <property type="gene ID" value="DDB_G0289317"/>
</dbReference>
<dbReference type="GeneID" id="8627077"/>
<dbReference type="KEGG" id="ddi:DDB_G0289317"/>
<dbReference type="dictyBase" id="DDB_G0289317">
    <property type="gene designation" value="drg1"/>
</dbReference>
<dbReference type="VEuPathDB" id="AmoebaDB:DDB_G0289317"/>
<dbReference type="eggNOG" id="KOG1487">
    <property type="taxonomic scope" value="Eukaryota"/>
</dbReference>
<dbReference type="HOGENOM" id="CLU_044997_0_0_1"/>
<dbReference type="InParanoid" id="Q54HP3"/>
<dbReference type="OMA" id="SAKHPGQ"/>
<dbReference type="PhylomeDB" id="Q54HP3"/>
<dbReference type="Reactome" id="R-DDI-9629569">
    <property type="pathway name" value="Protein hydroxylation"/>
</dbReference>
<dbReference type="PRO" id="PR:Q54HP3"/>
<dbReference type="Proteomes" id="UP000002195">
    <property type="component" value="Chromosome 5"/>
</dbReference>
<dbReference type="GO" id="GO:0005737">
    <property type="term" value="C:cytoplasm"/>
    <property type="evidence" value="ECO:0000318"/>
    <property type="project" value="GO_Central"/>
</dbReference>
<dbReference type="GO" id="GO:0005525">
    <property type="term" value="F:GTP binding"/>
    <property type="evidence" value="ECO:0000318"/>
    <property type="project" value="GO_Central"/>
</dbReference>
<dbReference type="GO" id="GO:0003924">
    <property type="term" value="F:GTPase activity"/>
    <property type="evidence" value="ECO:0007669"/>
    <property type="project" value="InterPro"/>
</dbReference>
<dbReference type="GO" id="GO:0002181">
    <property type="term" value="P:cytoplasmic translation"/>
    <property type="evidence" value="ECO:0000318"/>
    <property type="project" value="GO_Central"/>
</dbReference>
<dbReference type="CDD" id="cd01896">
    <property type="entry name" value="DRG"/>
    <property type="match status" value="1"/>
</dbReference>
<dbReference type="CDD" id="cd17230">
    <property type="entry name" value="TGS_DRG1"/>
    <property type="match status" value="1"/>
</dbReference>
<dbReference type="FunFam" id="3.10.20.30:FF:000003">
    <property type="entry name" value="Developmentally-regulated GTP-binding protein 1"/>
    <property type="match status" value="1"/>
</dbReference>
<dbReference type="FunFam" id="3.40.50.300:FF:000740">
    <property type="entry name" value="Putative GTP-binding protein 1"/>
    <property type="match status" value="1"/>
</dbReference>
<dbReference type="Gene3D" id="3.10.20.30">
    <property type="match status" value="1"/>
</dbReference>
<dbReference type="Gene3D" id="6.10.140.1070">
    <property type="match status" value="2"/>
</dbReference>
<dbReference type="InterPro" id="IPR012675">
    <property type="entry name" value="Beta-grasp_dom_sf"/>
</dbReference>
<dbReference type="InterPro" id="IPR045001">
    <property type="entry name" value="DRG"/>
</dbReference>
<dbReference type="InterPro" id="IPR031167">
    <property type="entry name" value="G_OBG"/>
</dbReference>
<dbReference type="InterPro" id="IPR006073">
    <property type="entry name" value="GTP-bd"/>
</dbReference>
<dbReference type="InterPro" id="IPR031662">
    <property type="entry name" value="GTP-binding_2"/>
</dbReference>
<dbReference type="InterPro" id="IPR006074">
    <property type="entry name" value="GTP1-OBG_CS"/>
</dbReference>
<dbReference type="InterPro" id="IPR027417">
    <property type="entry name" value="P-loop_NTPase"/>
</dbReference>
<dbReference type="InterPro" id="IPR005225">
    <property type="entry name" value="Small_GTP-bd"/>
</dbReference>
<dbReference type="InterPro" id="IPR004095">
    <property type="entry name" value="TGS"/>
</dbReference>
<dbReference type="InterPro" id="IPR012676">
    <property type="entry name" value="TGS-like"/>
</dbReference>
<dbReference type="NCBIfam" id="TIGR00231">
    <property type="entry name" value="small_GTP"/>
    <property type="match status" value="1"/>
</dbReference>
<dbReference type="PANTHER" id="PTHR43127">
    <property type="entry name" value="DEVELOPMENTALLY-REGULATED GTP-BINDING PROTEIN 2"/>
    <property type="match status" value="1"/>
</dbReference>
<dbReference type="Pfam" id="PF01926">
    <property type="entry name" value="MMR_HSR1"/>
    <property type="match status" value="1"/>
</dbReference>
<dbReference type="Pfam" id="PF16897">
    <property type="entry name" value="MMR_HSR1_Xtn"/>
    <property type="match status" value="1"/>
</dbReference>
<dbReference type="Pfam" id="PF02824">
    <property type="entry name" value="TGS"/>
    <property type="match status" value="1"/>
</dbReference>
<dbReference type="PRINTS" id="PR00326">
    <property type="entry name" value="GTP1OBG"/>
</dbReference>
<dbReference type="SUPFAM" id="SSF52540">
    <property type="entry name" value="P-loop containing nucleoside triphosphate hydrolases"/>
    <property type="match status" value="1"/>
</dbReference>
<dbReference type="SUPFAM" id="SSF81271">
    <property type="entry name" value="TGS-like"/>
    <property type="match status" value="1"/>
</dbReference>
<dbReference type="PROSITE" id="PS51710">
    <property type="entry name" value="G_OBG"/>
    <property type="match status" value="1"/>
</dbReference>
<dbReference type="PROSITE" id="PS00905">
    <property type="entry name" value="GTP1_OBG"/>
    <property type="match status" value="1"/>
</dbReference>
<dbReference type="PROSITE" id="PS51880">
    <property type="entry name" value="TGS"/>
    <property type="match status" value="1"/>
</dbReference>